<gene>
    <name type="primary">CAT</name>
</gene>
<reference key="1">
    <citation type="submission" date="2005-08" db="EMBL/GenBank/DDBJ databases">
        <authorList>
            <consortium name="NIH - Mammalian Gene Collection (MGC) project"/>
        </authorList>
    </citation>
    <scope>NUCLEOTIDE SEQUENCE [LARGE SCALE MRNA]</scope>
    <source>
        <strain>Hereford</strain>
        <tissue>Rumen reticulum</tissue>
    </source>
</reference>
<reference key="2">
    <citation type="journal article" date="1982" name="Arch. Biochem. Biophys.">
        <title>The complete amino acid sequence of bovine liver catalase and the partial sequence of bovine erythrocyte catalase.</title>
        <authorList>
            <person name="Schroeder W.A."/>
            <person name="Shelton J.R."/>
            <person name="Shelton J.B."/>
            <person name="Robberson B."/>
            <person name="Apell G."/>
            <person name="Fang R.S."/>
            <person name="Bonaventura J."/>
        </authorList>
    </citation>
    <scope>PROTEIN SEQUENCE OF 2-507</scope>
    <scope>SUBCELLULAR LOCATION</scope>
    <source>
        <tissue>Liver</tissue>
    </source>
</reference>
<reference key="3">
    <citation type="journal article" date="2000" name="Eur. J. Biochem.">
        <title>Immunological detection of alkaline-diaminobenzidine-negative peroxisomes of the nematode Caenorhabditis elegans. Purification and unique pH optima of peroxisomal catalase.</title>
        <authorList>
            <person name="Togo S.H."/>
            <person name="Maebuchi M."/>
            <person name="Yokota S."/>
            <person name="Bun-Ya M."/>
            <person name="Kawahara A."/>
            <person name="Kamiryo T."/>
        </authorList>
    </citation>
    <scope>CATALYTIC ACTIVITY</scope>
    <scope>BIOPHYSICOCHEMICAL PROPERTIES</scope>
</reference>
<reference key="4">
    <citation type="journal article" date="1981" name="J. Mol. Biol.">
        <title>Structure of beef liver catalase.</title>
        <authorList>
            <person name="Murthy M.R.N."/>
            <person name="Reid T.J. III"/>
            <person name="Sicignano A."/>
            <person name="Tanaka N."/>
            <person name="Rossmann M.G."/>
        </authorList>
    </citation>
    <scope>X-RAY CRYSTALLOGRAPHY (2.5 ANGSTROMS)</scope>
    <scope>ACTIVE SITE</scope>
    <source>
        <tissue>Liver</tissue>
    </source>
</reference>
<reference key="5">
    <citation type="journal article" date="1986" name="Acta Crystallogr. B">
        <title>The refined structure of beef liver catalase at 2.5-A resolution.</title>
        <authorList>
            <person name="Fita I."/>
            <person name="Silva A.M."/>
            <person name="Murthy M.R.N."/>
            <person name="Rossmann M.G."/>
        </authorList>
    </citation>
    <scope>X-RAY CRYSTALLOGRAPHY (2.5 ANGSTROMS)</scope>
    <source>
        <tissue>Liver</tissue>
    </source>
</reference>
<reference evidence="10" key="6">
    <citation type="journal article" date="1999" name="Acta Crystallogr. D">
        <title>Structure of orthorhombic crystals of beef liver catalase.</title>
        <authorList>
            <person name="Ko T.P."/>
            <person name="Day J."/>
            <person name="Malkin A.J."/>
            <person name="McPherson A."/>
        </authorList>
    </citation>
    <scope>X-RAY CRYSTALLOGRAPHY (2.3 ANGSTROMS) IN COMPLEX WITH NADPH AND HEME</scope>
    <scope>COFACTOR</scope>
    <scope>SUBUNIT</scope>
    <source>
        <tissue>Liver</tissue>
    </source>
</reference>
<reference key="7">
    <citation type="journal article" date="1986" name="J. Mol. Biol.">
        <title>Comparison of beef liver and Penicillium vitale catalases.</title>
        <authorList>
            <person name="Melik-Adamyan W.R."/>
            <person name="Barynin V.V."/>
            <person name="Vagin A.A."/>
            <person name="Borisov V.V."/>
            <person name="Vainshtein B.K."/>
            <person name="Fita I."/>
            <person name="Murthy M.R.N."/>
            <person name="Rossmann M.G."/>
        </authorList>
    </citation>
    <scope>SIMILARITY TO P.VITALE CATALASE</scope>
</reference>
<dbReference type="EC" id="1.11.1.6" evidence="3 6"/>
<dbReference type="EMBL" id="BC103066">
    <property type="protein sequence ID" value="AAI03067.1"/>
    <property type="molecule type" value="mRNA"/>
</dbReference>
<dbReference type="PIR" id="A00500">
    <property type="entry name" value="CSBO"/>
</dbReference>
<dbReference type="RefSeq" id="NP_001030463.1">
    <property type="nucleotide sequence ID" value="NM_001035386.2"/>
</dbReference>
<dbReference type="PDB" id="1TGU">
    <property type="method" value="X-ray"/>
    <property type="resolution" value="2.80 A"/>
    <property type="chains" value="A/B/C/D=2-507"/>
</dbReference>
<dbReference type="PDB" id="1TH2">
    <property type="method" value="X-ray"/>
    <property type="resolution" value="2.80 A"/>
    <property type="chains" value="A/B/C/D=2-507"/>
</dbReference>
<dbReference type="PDB" id="1TH3">
    <property type="method" value="X-ray"/>
    <property type="resolution" value="2.80 A"/>
    <property type="chains" value="A/B/C/D=2-507"/>
</dbReference>
<dbReference type="PDB" id="1TH4">
    <property type="method" value="X-ray"/>
    <property type="resolution" value="2.98 A"/>
    <property type="chains" value="A/B/C/D=2-507"/>
</dbReference>
<dbReference type="PDB" id="3J7B">
    <property type="method" value="EM"/>
    <property type="resolution" value="3.20 A"/>
    <property type="chains" value="A/B/C/D=1-527"/>
</dbReference>
<dbReference type="PDB" id="3NWL">
    <property type="method" value="X-ray"/>
    <property type="resolution" value="2.69 A"/>
    <property type="chains" value="A/B/C/D=1-527"/>
</dbReference>
<dbReference type="PDB" id="3RE8">
    <property type="method" value="X-ray"/>
    <property type="resolution" value="1.90 A"/>
    <property type="chains" value="A/B/C/D=4-502"/>
</dbReference>
<dbReference type="PDB" id="3RGP">
    <property type="method" value="X-ray"/>
    <property type="resolution" value="1.88 A"/>
    <property type="chains" value="A/B/C/D=4-502"/>
</dbReference>
<dbReference type="PDB" id="3RGS">
    <property type="method" value="X-ray"/>
    <property type="resolution" value="1.99 A"/>
    <property type="chains" value="A/B/C/D=4-502"/>
</dbReference>
<dbReference type="PDB" id="4BLC">
    <property type="method" value="X-ray"/>
    <property type="resolution" value="2.30 A"/>
    <property type="chains" value="A/B/C/D=2-507"/>
</dbReference>
<dbReference type="PDB" id="5GKN">
    <property type="method" value="EM"/>
    <property type="resolution" value="3.20 A"/>
    <property type="chains" value="A/B/C/D=1-527"/>
</dbReference>
<dbReference type="PDB" id="6JNT">
    <property type="method" value="EM"/>
    <property type="resolution" value="3.00 A"/>
    <property type="chains" value="A/B/C/D=1-527"/>
</dbReference>
<dbReference type="PDB" id="6JNU">
    <property type="method" value="EM"/>
    <property type="resolution" value="3.00 A"/>
    <property type="chains" value="A/B/C/D=1-527"/>
</dbReference>
<dbReference type="PDB" id="6PM7">
    <property type="method" value="X-ray"/>
    <property type="resolution" value="1.85 A"/>
    <property type="chains" value="A/B=1-527"/>
</dbReference>
<dbReference type="PDB" id="6PO0">
    <property type="method" value="X-ray"/>
    <property type="resolution" value="1.75 A"/>
    <property type="chains" value="A/B/C/D=1-527"/>
</dbReference>
<dbReference type="PDB" id="7CAT">
    <property type="method" value="X-ray"/>
    <property type="resolution" value="2.50 A"/>
    <property type="chains" value="A/B=2-507"/>
</dbReference>
<dbReference type="PDB" id="7DI8">
    <property type="method" value="EM"/>
    <property type="resolution" value="3.20 A"/>
    <property type="chains" value="A/B/C/D=1-527"/>
</dbReference>
<dbReference type="PDB" id="8CAT">
    <property type="method" value="X-ray"/>
    <property type="resolution" value="2.50 A"/>
    <property type="chains" value="A/B=2-507"/>
</dbReference>
<dbReference type="PDB" id="9BDJ">
    <property type="method" value="EM"/>
    <property type="resolution" value="4.00 A"/>
    <property type="chains" value="A/B/C/D=1-527"/>
</dbReference>
<dbReference type="PDBsum" id="1TGU"/>
<dbReference type="PDBsum" id="1TH2"/>
<dbReference type="PDBsum" id="1TH3"/>
<dbReference type="PDBsum" id="1TH4"/>
<dbReference type="PDBsum" id="3J7B"/>
<dbReference type="PDBsum" id="3NWL"/>
<dbReference type="PDBsum" id="3RE8"/>
<dbReference type="PDBsum" id="3RGP"/>
<dbReference type="PDBsum" id="3RGS"/>
<dbReference type="PDBsum" id="4BLC"/>
<dbReference type="PDBsum" id="5GKN"/>
<dbReference type="PDBsum" id="6JNT"/>
<dbReference type="PDBsum" id="6JNU"/>
<dbReference type="PDBsum" id="6PM7"/>
<dbReference type="PDBsum" id="6PO0"/>
<dbReference type="PDBsum" id="7CAT"/>
<dbReference type="PDBsum" id="7DI8"/>
<dbReference type="PDBsum" id="8CAT"/>
<dbReference type="PDBsum" id="9BDJ"/>
<dbReference type="EMDB" id="EMD-44453"/>
<dbReference type="EMDB" id="EMD-6314"/>
<dbReference type="SASBDB" id="P00432"/>
<dbReference type="SMR" id="P00432"/>
<dbReference type="BioGRID" id="188290">
    <property type="interactions" value="1"/>
</dbReference>
<dbReference type="ComplexPortal" id="CPX-4768">
    <property type="entry name" value="Catalase complex"/>
</dbReference>
<dbReference type="FunCoup" id="P00432">
    <property type="interactions" value="1470"/>
</dbReference>
<dbReference type="IntAct" id="P00432">
    <property type="interactions" value="1"/>
</dbReference>
<dbReference type="STRING" id="9913.ENSBTAP00000074355"/>
<dbReference type="BindingDB" id="P00432"/>
<dbReference type="ChEMBL" id="CHEMBL2227489"/>
<dbReference type="PeroxiBase" id="5281">
    <property type="entry name" value="BtKat01"/>
</dbReference>
<dbReference type="PaxDb" id="9913-ENSBTAP00000027941"/>
<dbReference type="PeptideAtlas" id="P00432"/>
<dbReference type="Ensembl" id="ENSBTAT00000027941.7">
    <property type="protein sequence ID" value="ENSBTAP00000027941.5"/>
    <property type="gene ID" value="ENSBTAG00000020980.7"/>
</dbReference>
<dbReference type="GeneID" id="531682"/>
<dbReference type="KEGG" id="bta:531682"/>
<dbReference type="CTD" id="847"/>
<dbReference type="VEuPathDB" id="HostDB:ENSBTAG00000020980"/>
<dbReference type="VGNC" id="VGNC:26792">
    <property type="gene designation" value="CAT"/>
</dbReference>
<dbReference type="eggNOG" id="KOG0047">
    <property type="taxonomic scope" value="Eukaryota"/>
</dbReference>
<dbReference type="GeneTree" id="ENSGT00390000018100"/>
<dbReference type="HOGENOM" id="CLU_010645_2_0_1"/>
<dbReference type="InParanoid" id="P00432"/>
<dbReference type="OrthoDB" id="6880011at2759"/>
<dbReference type="TreeFam" id="TF300540"/>
<dbReference type="BRENDA" id="1.11.1.6">
    <property type="organism ID" value="908"/>
</dbReference>
<dbReference type="Reactome" id="R-BTA-3299685">
    <property type="pathway name" value="Detoxification of Reactive Oxygen Species"/>
</dbReference>
<dbReference type="Reactome" id="R-BTA-6798695">
    <property type="pathway name" value="Neutrophil degranulation"/>
</dbReference>
<dbReference type="Reactome" id="R-BTA-9033241">
    <property type="pathway name" value="Peroxisomal protein import"/>
</dbReference>
<dbReference type="SABIO-RK" id="P00432"/>
<dbReference type="EvolutionaryTrace" id="P00432"/>
<dbReference type="PRO" id="PR:P00432"/>
<dbReference type="Proteomes" id="UP000009136">
    <property type="component" value="Chromosome 15"/>
</dbReference>
<dbReference type="Bgee" id="ENSBTAG00000020980">
    <property type="expression patterns" value="Expressed in liver and 105 other cell types or tissues"/>
</dbReference>
<dbReference type="GO" id="GO:0062151">
    <property type="term" value="C:catalase complex"/>
    <property type="evidence" value="ECO:0000353"/>
    <property type="project" value="ComplexPortal"/>
</dbReference>
<dbReference type="GO" id="GO:0005737">
    <property type="term" value="C:cytoplasm"/>
    <property type="evidence" value="ECO:0000318"/>
    <property type="project" value="GO_Central"/>
</dbReference>
<dbReference type="GO" id="GO:0005739">
    <property type="term" value="C:mitochondrion"/>
    <property type="evidence" value="ECO:0000318"/>
    <property type="project" value="GO_Central"/>
</dbReference>
<dbReference type="GO" id="GO:0005782">
    <property type="term" value="C:peroxisomal matrix"/>
    <property type="evidence" value="ECO:0007669"/>
    <property type="project" value="UniProtKB-SubCell"/>
</dbReference>
<dbReference type="GO" id="GO:0005777">
    <property type="term" value="C:peroxisome"/>
    <property type="evidence" value="ECO:0000266"/>
    <property type="project" value="ComplexPortal"/>
</dbReference>
<dbReference type="GO" id="GO:0004096">
    <property type="term" value="F:catalase activity"/>
    <property type="evidence" value="ECO:0000314"/>
    <property type="project" value="UniProtKB"/>
</dbReference>
<dbReference type="GO" id="GO:0019899">
    <property type="term" value="F:enzyme binding"/>
    <property type="evidence" value="ECO:0000353"/>
    <property type="project" value="UniProtKB"/>
</dbReference>
<dbReference type="GO" id="GO:0020037">
    <property type="term" value="F:heme binding"/>
    <property type="evidence" value="ECO:0000318"/>
    <property type="project" value="GO_Central"/>
</dbReference>
<dbReference type="GO" id="GO:0046872">
    <property type="term" value="F:metal ion binding"/>
    <property type="evidence" value="ECO:0007669"/>
    <property type="project" value="UniProtKB-KW"/>
</dbReference>
<dbReference type="GO" id="GO:0061692">
    <property type="term" value="P:cellular detoxification of hydrogen peroxide"/>
    <property type="evidence" value="ECO:0000266"/>
    <property type="project" value="ComplexPortal"/>
</dbReference>
<dbReference type="GO" id="GO:0042744">
    <property type="term" value="P:hydrogen peroxide catabolic process"/>
    <property type="evidence" value="ECO:0000314"/>
    <property type="project" value="UniProtKB"/>
</dbReference>
<dbReference type="GO" id="GO:0051781">
    <property type="term" value="P:positive regulation of cell division"/>
    <property type="evidence" value="ECO:0007669"/>
    <property type="project" value="UniProtKB-KW"/>
</dbReference>
<dbReference type="GO" id="GO:0042542">
    <property type="term" value="P:response to hydrogen peroxide"/>
    <property type="evidence" value="ECO:0000318"/>
    <property type="project" value="GO_Central"/>
</dbReference>
<dbReference type="CDD" id="cd08156">
    <property type="entry name" value="catalase_clade_3"/>
    <property type="match status" value="1"/>
</dbReference>
<dbReference type="FunFam" id="2.40.180.10:FF:000001">
    <property type="entry name" value="Catalase"/>
    <property type="match status" value="1"/>
</dbReference>
<dbReference type="Gene3D" id="2.40.180.10">
    <property type="entry name" value="Catalase core domain"/>
    <property type="match status" value="1"/>
</dbReference>
<dbReference type="InterPro" id="IPR018028">
    <property type="entry name" value="Catalase"/>
</dbReference>
<dbReference type="InterPro" id="IPR040333">
    <property type="entry name" value="Catalase_3"/>
</dbReference>
<dbReference type="InterPro" id="IPR024708">
    <property type="entry name" value="Catalase_AS"/>
</dbReference>
<dbReference type="InterPro" id="IPR024711">
    <property type="entry name" value="Catalase_clade1/3"/>
</dbReference>
<dbReference type="InterPro" id="IPR011614">
    <property type="entry name" value="Catalase_core"/>
</dbReference>
<dbReference type="InterPro" id="IPR002226">
    <property type="entry name" value="Catalase_haem_BS"/>
</dbReference>
<dbReference type="InterPro" id="IPR010582">
    <property type="entry name" value="Catalase_immune_responsive"/>
</dbReference>
<dbReference type="InterPro" id="IPR020835">
    <property type="entry name" value="Catalase_sf"/>
</dbReference>
<dbReference type="PANTHER" id="PTHR11465">
    <property type="entry name" value="CATALASE"/>
    <property type="match status" value="1"/>
</dbReference>
<dbReference type="PANTHER" id="PTHR11465:SF9">
    <property type="entry name" value="CATALASE"/>
    <property type="match status" value="1"/>
</dbReference>
<dbReference type="Pfam" id="PF00199">
    <property type="entry name" value="Catalase"/>
    <property type="match status" value="1"/>
</dbReference>
<dbReference type="Pfam" id="PF06628">
    <property type="entry name" value="Catalase-rel"/>
    <property type="match status" value="1"/>
</dbReference>
<dbReference type="PIRSF" id="PIRSF038928">
    <property type="entry name" value="Catalase_clade1-3"/>
    <property type="match status" value="1"/>
</dbReference>
<dbReference type="PRINTS" id="PR00067">
    <property type="entry name" value="CATALASE"/>
</dbReference>
<dbReference type="SMART" id="SM01060">
    <property type="entry name" value="Catalase"/>
    <property type="match status" value="1"/>
</dbReference>
<dbReference type="SUPFAM" id="SSF56634">
    <property type="entry name" value="Heme-dependent catalase-like"/>
    <property type="match status" value="1"/>
</dbReference>
<dbReference type="PROSITE" id="PS00437">
    <property type="entry name" value="CATALASE_1"/>
    <property type="match status" value="1"/>
</dbReference>
<dbReference type="PROSITE" id="PS00438">
    <property type="entry name" value="CATALASE_2"/>
    <property type="match status" value="1"/>
</dbReference>
<dbReference type="PROSITE" id="PS51402">
    <property type="entry name" value="CATALASE_3"/>
    <property type="match status" value="1"/>
</dbReference>
<name>CATA_BOVIN</name>
<accession>P00432</accession>
<accession>Q3SZ80</accession>
<keyword id="KW-0002">3D-structure</keyword>
<keyword id="KW-0007">Acetylation</keyword>
<keyword id="KW-0903">Direct protein sequencing</keyword>
<keyword id="KW-0349">Heme</keyword>
<keyword id="KW-0376">Hydrogen peroxide</keyword>
<keyword id="KW-0408">Iron</keyword>
<keyword id="KW-0479">Metal-binding</keyword>
<keyword id="KW-0497">Mitogen</keyword>
<keyword id="KW-0521">NADP</keyword>
<keyword id="KW-0560">Oxidoreductase</keyword>
<keyword id="KW-0575">Peroxidase</keyword>
<keyword id="KW-0576">Peroxisome</keyword>
<keyword id="KW-0597">Phosphoprotein</keyword>
<keyword id="KW-1185">Reference proteome</keyword>
<evidence type="ECO:0000250" key="1">
    <source>
        <dbReference type="UniProtKB" id="P04040"/>
    </source>
</evidence>
<evidence type="ECO:0000250" key="2">
    <source>
        <dbReference type="UniProtKB" id="P24270"/>
    </source>
</evidence>
<evidence type="ECO:0000255" key="3">
    <source>
        <dbReference type="PROSITE-ProRule" id="PRU10013"/>
    </source>
</evidence>
<evidence type="ECO:0000256" key="4">
    <source>
        <dbReference type="SAM" id="MobiDB-lite"/>
    </source>
</evidence>
<evidence type="ECO:0000269" key="5">
    <source>
    </source>
</evidence>
<evidence type="ECO:0000269" key="6">
    <source>
    </source>
</evidence>
<evidence type="ECO:0000269" key="7">
    <source>
    </source>
</evidence>
<evidence type="ECO:0000269" key="8">
    <source>
    </source>
</evidence>
<evidence type="ECO:0000305" key="9"/>
<evidence type="ECO:0007744" key="10">
    <source>
        <dbReference type="PDB" id="4BLC"/>
    </source>
</evidence>
<evidence type="ECO:0007829" key="11">
    <source>
        <dbReference type="PDB" id="3RGP"/>
    </source>
</evidence>
<evidence type="ECO:0007829" key="12">
    <source>
        <dbReference type="PDB" id="3RGS"/>
    </source>
</evidence>
<evidence type="ECO:0007829" key="13">
    <source>
        <dbReference type="PDB" id="4BLC"/>
    </source>
</evidence>
<evidence type="ECO:0007829" key="14">
    <source>
        <dbReference type="PDB" id="6PO0"/>
    </source>
</evidence>
<evidence type="ECO:0007829" key="15">
    <source>
        <dbReference type="PDB" id="7DI8"/>
    </source>
</evidence>
<organism>
    <name type="scientific">Bos taurus</name>
    <name type="common">Bovine</name>
    <dbReference type="NCBI Taxonomy" id="9913"/>
    <lineage>
        <taxon>Eukaryota</taxon>
        <taxon>Metazoa</taxon>
        <taxon>Chordata</taxon>
        <taxon>Craniata</taxon>
        <taxon>Vertebrata</taxon>
        <taxon>Euteleostomi</taxon>
        <taxon>Mammalia</taxon>
        <taxon>Eutheria</taxon>
        <taxon>Laurasiatheria</taxon>
        <taxon>Artiodactyla</taxon>
        <taxon>Ruminantia</taxon>
        <taxon>Pecora</taxon>
        <taxon>Bovidae</taxon>
        <taxon>Bovinae</taxon>
        <taxon>Bos</taxon>
    </lineage>
</organism>
<proteinExistence type="evidence at protein level"/>
<feature type="initiator methionine" description="Removed" evidence="7">
    <location>
        <position position="1"/>
    </location>
</feature>
<feature type="chain" id="PRO_0000084898" description="Catalase">
    <location>
        <begin position="2"/>
        <end position="527"/>
    </location>
</feature>
<feature type="region of interest" description="Disordered" evidence="4">
    <location>
        <begin position="1"/>
        <end position="42"/>
    </location>
</feature>
<feature type="short sequence motif" description="Microbody targeting signal; atypical" evidence="1">
    <location>
        <begin position="524"/>
        <end position="527"/>
    </location>
</feature>
<feature type="compositionally biased region" description="Basic and acidic residues" evidence="4">
    <location>
        <begin position="1"/>
        <end position="22"/>
    </location>
</feature>
<feature type="active site" evidence="3 8">
    <location>
        <position position="75"/>
    </location>
</feature>
<feature type="active site" evidence="3">
    <location>
        <position position="148"/>
    </location>
</feature>
<feature type="binding site" evidence="5 10">
    <location>
        <position position="194"/>
    </location>
    <ligand>
        <name>NADP(+)</name>
        <dbReference type="ChEBI" id="CHEBI:58349"/>
    </ligand>
</feature>
<feature type="binding site" evidence="5 10">
    <location>
        <position position="198"/>
    </location>
    <ligand>
        <name>NADP(+)</name>
        <dbReference type="ChEBI" id="CHEBI:58349"/>
    </ligand>
</feature>
<feature type="binding site" evidence="5 10">
    <location>
        <position position="201"/>
    </location>
    <ligand>
        <name>NADP(+)</name>
        <dbReference type="ChEBI" id="CHEBI:58349"/>
    </ligand>
</feature>
<feature type="binding site" evidence="5 10">
    <location>
        <position position="203"/>
    </location>
    <ligand>
        <name>NADP(+)</name>
        <dbReference type="ChEBI" id="CHEBI:58349"/>
    </ligand>
</feature>
<feature type="binding site" evidence="1">
    <location>
        <position position="213"/>
    </location>
    <ligand>
        <name>NADP(+)</name>
        <dbReference type="ChEBI" id="CHEBI:58349"/>
    </ligand>
</feature>
<feature type="binding site" evidence="5 10">
    <location>
        <position position="215"/>
    </location>
    <ligand>
        <name>NADP(+)</name>
        <dbReference type="ChEBI" id="CHEBI:58349"/>
    </ligand>
</feature>
<feature type="binding site" evidence="5 10">
    <location>
        <position position="237"/>
    </location>
    <ligand>
        <name>NADP(+)</name>
        <dbReference type="ChEBI" id="CHEBI:58349"/>
    </ligand>
</feature>
<feature type="binding site" evidence="5 10">
    <location>
        <position position="303"/>
    </location>
    <ligand>
        <name>NADP(+)</name>
        <dbReference type="ChEBI" id="CHEBI:58349"/>
    </ligand>
</feature>
<feature type="binding site" evidence="5 10">
    <location>
        <position position="305"/>
    </location>
    <ligand>
        <name>NADP(+)</name>
        <dbReference type="ChEBI" id="CHEBI:58349"/>
    </ligand>
</feature>
<feature type="binding site" description="axial binding residue" evidence="5 10">
    <location>
        <position position="358"/>
    </location>
    <ligand>
        <name>heme</name>
        <dbReference type="ChEBI" id="CHEBI:30413"/>
    </ligand>
    <ligandPart>
        <name>Fe</name>
        <dbReference type="ChEBI" id="CHEBI:18248"/>
    </ligandPart>
</feature>
<feature type="binding site" evidence="5 10">
    <location>
        <position position="442"/>
    </location>
    <ligand>
        <name>NADP(+)</name>
        <dbReference type="ChEBI" id="CHEBI:58349"/>
    </ligand>
</feature>
<feature type="binding site" evidence="5 10">
    <location>
        <position position="445"/>
    </location>
    <ligand>
        <name>NADP(+)</name>
        <dbReference type="ChEBI" id="CHEBI:58349"/>
    </ligand>
</feature>
<feature type="binding site" evidence="5 10">
    <location>
        <position position="446"/>
    </location>
    <ligand>
        <name>NADP(+)</name>
        <dbReference type="ChEBI" id="CHEBI:58349"/>
    </ligand>
</feature>
<feature type="modified residue" description="Blocked amino end (Ala); alternate" evidence="7">
    <location>
        <position position="2"/>
    </location>
</feature>
<feature type="modified residue" description="N-acetylalanine; alternate" evidence="1">
    <location>
        <position position="2"/>
    </location>
</feature>
<feature type="modified residue" description="Phosphoserine" evidence="1">
    <location>
        <position position="9"/>
    </location>
</feature>
<feature type="modified residue" description="N6-succinyllysine" evidence="2">
    <location>
        <position position="13"/>
    </location>
</feature>
<feature type="modified residue" description="N6-succinyllysine" evidence="2">
    <location>
        <position position="221"/>
    </location>
</feature>
<feature type="modified residue" description="N6-acetyllysine" evidence="2">
    <location>
        <position position="233"/>
    </location>
</feature>
<feature type="modified residue" description="Phosphoserine" evidence="2">
    <location>
        <position position="417"/>
    </location>
</feature>
<feature type="modified residue" description="Phosphoserine" evidence="2">
    <location>
        <position position="434"/>
    </location>
</feature>
<feature type="modified residue" description="N6-acetyllysine; alternate" evidence="2">
    <location>
        <position position="449"/>
    </location>
</feature>
<feature type="modified residue" description="N6-succinyllysine; alternate" evidence="2">
    <location>
        <position position="449"/>
    </location>
</feature>
<feature type="modified residue" description="N6-acetyllysine; alternate" evidence="2">
    <location>
        <position position="480"/>
    </location>
</feature>
<feature type="modified residue" description="N6-succinyllysine; alternate" evidence="2">
    <location>
        <position position="480"/>
    </location>
</feature>
<feature type="modified residue" description="N6-acetyllysine" evidence="2">
    <location>
        <position position="499"/>
    </location>
</feature>
<feature type="modified residue" description="Phosphothreonine" evidence="1">
    <location>
        <position position="511"/>
    </location>
</feature>
<feature type="modified residue" description="Phosphoserine" evidence="1">
    <location>
        <position position="517"/>
    </location>
</feature>
<feature type="sequence conflict" description="In Ref. 2; AA sequence." evidence="9" ref="2">
    <original>N</original>
    <variation>D</variation>
    <location>
        <position position="213"/>
    </location>
</feature>
<feature type="sequence conflict" description="In Ref. 2; AA sequence." evidence="9" ref="2">
    <original>N</original>
    <variation>D</variation>
    <location>
        <position position="226"/>
    </location>
</feature>
<feature type="turn" evidence="14">
    <location>
        <begin position="7"/>
        <end position="10"/>
    </location>
</feature>
<feature type="helix" evidence="14">
    <location>
        <begin position="11"/>
        <end position="18"/>
    </location>
</feature>
<feature type="turn" evidence="14">
    <location>
        <begin position="19"/>
        <end position="21"/>
    </location>
</feature>
<feature type="strand" evidence="14">
    <location>
        <begin position="38"/>
        <end position="40"/>
    </location>
</feature>
<feature type="strand" evidence="14">
    <location>
        <begin position="42"/>
        <end position="45"/>
    </location>
</feature>
<feature type="strand" evidence="15">
    <location>
        <begin position="50"/>
        <end position="53"/>
    </location>
</feature>
<feature type="helix" evidence="14">
    <location>
        <begin position="55"/>
        <end position="64"/>
    </location>
</feature>
<feature type="strand" evidence="12">
    <location>
        <begin position="73"/>
        <end position="75"/>
    </location>
</feature>
<feature type="strand" evidence="14">
    <location>
        <begin position="77"/>
        <end position="87"/>
    </location>
</feature>
<feature type="turn" evidence="14">
    <location>
        <begin position="92"/>
        <end position="94"/>
    </location>
</feature>
<feature type="helix" evidence="14">
    <location>
        <begin position="98"/>
        <end position="100"/>
    </location>
</feature>
<feature type="strand" evidence="14">
    <location>
        <begin position="106"/>
        <end position="114"/>
    </location>
</feature>
<feature type="strand" evidence="11">
    <location>
        <begin position="116"/>
        <end position="118"/>
    </location>
</feature>
<feature type="strand" evidence="14">
    <location>
        <begin position="124"/>
        <end position="128"/>
    </location>
</feature>
<feature type="strand" evidence="14">
    <location>
        <begin position="131"/>
        <end position="138"/>
    </location>
</feature>
<feature type="strand" evidence="14">
    <location>
        <begin position="141"/>
        <end position="151"/>
    </location>
</feature>
<feature type="helix" evidence="14">
    <location>
        <begin position="158"/>
        <end position="160"/>
    </location>
</feature>
<feature type="helix" evidence="14">
    <location>
        <begin position="161"/>
        <end position="168"/>
    </location>
</feature>
<feature type="turn" evidence="14">
    <location>
        <begin position="172"/>
        <end position="174"/>
    </location>
</feature>
<feature type="helix" evidence="14">
    <location>
        <begin position="179"/>
        <end position="188"/>
    </location>
</feature>
<feature type="helix" evidence="14">
    <location>
        <begin position="190"/>
        <end position="192"/>
    </location>
</feature>
<feature type="helix" evidence="14">
    <location>
        <begin position="193"/>
        <end position="199"/>
    </location>
</feature>
<feature type="helix" evidence="14">
    <location>
        <begin position="202"/>
        <end position="204"/>
    </location>
</feature>
<feature type="strand" evidence="14">
    <location>
        <begin position="205"/>
        <end position="209"/>
    </location>
</feature>
<feature type="strand" evidence="14">
    <location>
        <begin position="220"/>
        <end position="223"/>
    </location>
</feature>
<feature type="strand" evidence="14">
    <location>
        <begin position="229"/>
        <end position="238"/>
    </location>
</feature>
<feature type="helix" evidence="14">
    <location>
        <begin position="247"/>
        <end position="256"/>
    </location>
</feature>
<feature type="helix" evidence="14">
    <location>
        <begin position="260"/>
        <end position="270"/>
    </location>
</feature>
<feature type="strand" evidence="14">
    <location>
        <begin position="276"/>
        <end position="284"/>
    </location>
</feature>
<feature type="helix" evidence="14">
    <location>
        <begin position="286"/>
        <end position="291"/>
    </location>
</feature>
<feature type="turn" evidence="14">
    <location>
        <begin position="305"/>
        <end position="307"/>
    </location>
</feature>
<feature type="strand" evidence="14">
    <location>
        <begin position="311"/>
        <end position="320"/>
    </location>
</feature>
<feature type="helix" evidence="14">
    <location>
        <begin position="325"/>
        <end position="328"/>
    </location>
</feature>
<feature type="turn" evidence="14">
    <location>
        <begin position="329"/>
        <end position="331"/>
    </location>
</feature>
<feature type="strand" evidence="14">
    <location>
        <begin position="343"/>
        <end position="345"/>
    </location>
</feature>
<feature type="helix" evidence="14">
    <location>
        <begin position="349"/>
        <end position="365"/>
    </location>
</feature>
<feature type="helix" evidence="14">
    <location>
        <begin position="370"/>
        <end position="372"/>
    </location>
</feature>
<feature type="helix" evidence="14">
    <location>
        <begin position="374"/>
        <end position="376"/>
    </location>
</feature>
<feature type="turn" evidence="14">
    <location>
        <begin position="395"/>
        <end position="400"/>
    </location>
</feature>
<feature type="strand" evidence="14">
    <location>
        <begin position="404"/>
        <end position="406"/>
    </location>
</feature>
<feature type="helix" evidence="14">
    <location>
        <begin position="416"/>
        <end position="418"/>
    </location>
</feature>
<feature type="strand" evidence="14">
    <location>
        <begin position="424"/>
        <end position="431"/>
    </location>
</feature>
<feature type="strand" evidence="13">
    <location>
        <begin position="435"/>
        <end position="437"/>
    </location>
</feature>
<feature type="helix" evidence="14">
    <location>
        <begin position="441"/>
        <end position="448"/>
    </location>
</feature>
<feature type="helix" evidence="14">
    <location>
        <begin position="453"/>
        <end position="467"/>
    </location>
</feature>
<feature type="helix" evidence="14">
    <location>
        <begin position="472"/>
        <end position="485"/>
    </location>
</feature>
<feature type="helix" evidence="14">
    <location>
        <begin position="487"/>
        <end position="500"/>
    </location>
</feature>
<protein>
    <recommendedName>
        <fullName>Catalase</fullName>
        <ecNumber evidence="3 6">1.11.1.6</ecNumber>
    </recommendedName>
</protein>
<sequence length="527" mass="59915">MADNRDPASDQMKHWKEQRAAQKPDVLTTGGGNPVGDKLNSLTVGPRGPLLVQDVVFTDEMAHFDRERIPERVVHAKGAGAFGYFEVTHDITRYSKAKVFEHIGKRTPIAVRFSTVAGESGSADTVRDPRGFAVKFYTEDGNWDLVGNNTPIFFIRDALLFPSFIHSQKRNPQTHLKDPDMVWDFWSLRPESLHQVSFLFSDRGIPDGHRHMNGYGSHTFKLVNANGEAVYCKFHYKTDQGIKNLSVEDAARLAHEDPDYGLRDLFNAIATGNYPSWTLYIQVMTFSEAEIFPFNPFDLTKVWPHGDYPLIPVGKLVLNRNPVNYFAEVEQLAFDPSNMPPGIEPSPDKMLQGRLFAYPDTHRHRLGPNYLQIPVNCPYRARVANYQRDGPMCMMDNQGGAPNYYPNSFSAPEHQPSALEHRTHFSGDVQRFNSANDDNVTQVRTFYLKVLNEEQRKRLCENIAGHLKDAQLFIQKKAVKNFSDVHPEYGSRIQALLDKYNEEKPKNAVHTYVQHGSHLSAREKANL</sequence>
<comment type="function">
    <text evidence="6">Catalyzes the degradation of hydrogen peroxide (H(2)O(2)) generated by peroxisomal oxidases to water and oxygen, thereby protecting cells from the toxic effects of hydrogen peroxide (PubMed:10691967). Promotes growth of cells including T-cells, B-cells, myeloid leukemia cells, melanoma cells, mastocytoma cells and normal and transformed fibroblast cells (PubMed:10691967).</text>
</comment>
<comment type="catalytic activity">
    <reaction evidence="3 6">
        <text>2 H2O2 = O2 + 2 H2O</text>
        <dbReference type="Rhea" id="RHEA:20309"/>
        <dbReference type="ChEBI" id="CHEBI:15377"/>
        <dbReference type="ChEBI" id="CHEBI:15379"/>
        <dbReference type="ChEBI" id="CHEBI:16240"/>
        <dbReference type="EC" id="1.11.1.6"/>
    </reaction>
</comment>
<comment type="cofactor">
    <cofactor evidence="5">
        <name>heme</name>
        <dbReference type="ChEBI" id="CHEBI:30413"/>
    </cofactor>
</comment>
<comment type="cofactor">
    <cofactor evidence="5">
        <name>NADP(+)</name>
        <dbReference type="ChEBI" id="CHEBI:58349"/>
    </cofactor>
</comment>
<comment type="biophysicochemical properties">
    <phDependence>
        <text evidence="6">Optimum pH is 7.</text>
    </phDependence>
</comment>
<comment type="subunit">
    <text evidence="1 5">Homotetramer (PubMed:10417406). Interacts (via microbody targeting signal) with PEX5, monomeric form interacts with PEX5, leading to its translocation into peroxisomes (By similarity).</text>
</comment>
<comment type="subcellular location">
    <subcellularLocation>
        <location evidence="7">Peroxisome matrix</location>
    </subcellularLocation>
</comment>
<comment type="similarity">
    <text evidence="9">Belongs to the catalase family.</text>
</comment>